<accession>B4SKX7</accession>
<proteinExistence type="inferred from homology"/>
<name>RS8_STRM5</name>
<keyword id="KW-0687">Ribonucleoprotein</keyword>
<keyword id="KW-0689">Ribosomal protein</keyword>
<keyword id="KW-0694">RNA-binding</keyword>
<keyword id="KW-0699">rRNA-binding</keyword>
<protein>
    <recommendedName>
        <fullName evidence="1">Small ribosomal subunit protein uS8</fullName>
    </recommendedName>
    <alternativeName>
        <fullName evidence="2">30S ribosomal protein S8</fullName>
    </alternativeName>
</protein>
<sequence>MSMTDPIADLLVRIKNAAAVGKQTVKAPSSKIKVAIAQVLKDEGYITDLRVTALENNKSELEIVLKYFEGKPVIATLKRFSRSGLRQYRGKSELPKVMNGLGISIISTSKGIMTDAQARQLGVGGEVLCFVA</sequence>
<reference key="1">
    <citation type="submission" date="2008-06" db="EMBL/GenBank/DDBJ databases">
        <title>Complete sequence of Stenotrophomonas maltophilia R551-3.</title>
        <authorList>
            <consortium name="US DOE Joint Genome Institute"/>
            <person name="Lucas S."/>
            <person name="Copeland A."/>
            <person name="Lapidus A."/>
            <person name="Glavina del Rio T."/>
            <person name="Dalin E."/>
            <person name="Tice H."/>
            <person name="Pitluck S."/>
            <person name="Chain P."/>
            <person name="Malfatti S."/>
            <person name="Shin M."/>
            <person name="Vergez L."/>
            <person name="Lang D."/>
            <person name="Schmutz J."/>
            <person name="Larimer F."/>
            <person name="Land M."/>
            <person name="Hauser L."/>
            <person name="Kyrpides N."/>
            <person name="Mikhailova N."/>
            <person name="Taghavi S."/>
            <person name="Monchy S."/>
            <person name="Newman L."/>
            <person name="Vangronsveld J."/>
            <person name="van der Lelie D."/>
            <person name="Richardson P."/>
        </authorList>
    </citation>
    <scope>NUCLEOTIDE SEQUENCE [LARGE SCALE GENOMIC DNA]</scope>
    <source>
        <strain>R551-3</strain>
    </source>
</reference>
<comment type="function">
    <text evidence="1">One of the primary rRNA binding proteins, it binds directly to 16S rRNA central domain where it helps coordinate assembly of the platform of the 30S subunit.</text>
</comment>
<comment type="subunit">
    <text evidence="1">Part of the 30S ribosomal subunit. Contacts proteins S5 and S12.</text>
</comment>
<comment type="similarity">
    <text evidence="1">Belongs to the universal ribosomal protein uS8 family.</text>
</comment>
<organism>
    <name type="scientific">Stenotrophomonas maltophilia (strain R551-3)</name>
    <dbReference type="NCBI Taxonomy" id="391008"/>
    <lineage>
        <taxon>Bacteria</taxon>
        <taxon>Pseudomonadati</taxon>
        <taxon>Pseudomonadota</taxon>
        <taxon>Gammaproteobacteria</taxon>
        <taxon>Lysobacterales</taxon>
        <taxon>Lysobacteraceae</taxon>
        <taxon>Stenotrophomonas</taxon>
        <taxon>Stenotrophomonas maltophilia group</taxon>
    </lineage>
</organism>
<dbReference type="EMBL" id="CP001111">
    <property type="protein sequence ID" value="ACF50475.1"/>
    <property type="molecule type" value="Genomic_DNA"/>
</dbReference>
<dbReference type="RefSeq" id="WP_004145387.1">
    <property type="nucleotide sequence ID" value="NC_011071.1"/>
</dbReference>
<dbReference type="SMR" id="B4SKX7"/>
<dbReference type="STRING" id="391008.Smal_0770"/>
<dbReference type="KEGG" id="smt:Smal_0770"/>
<dbReference type="eggNOG" id="COG0096">
    <property type="taxonomic scope" value="Bacteria"/>
</dbReference>
<dbReference type="HOGENOM" id="CLU_098428_0_0_6"/>
<dbReference type="OrthoDB" id="9802617at2"/>
<dbReference type="Proteomes" id="UP000001867">
    <property type="component" value="Chromosome"/>
</dbReference>
<dbReference type="GO" id="GO:1990904">
    <property type="term" value="C:ribonucleoprotein complex"/>
    <property type="evidence" value="ECO:0007669"/>
    <property type="project" value="UniProtKB-KW"/>
</dbReference>
<dbReference type="GO" id="GO:0005840">
    <property type="term" value="C:ribosome"/>
    <property type="evidence" value="ECO:0007669"/>
    <property type="project" value="UniProtKB-KW"/>
</dbReference>
<dbReference type="GO" id="GO:0019843">
    <property type="term" value="F:rRNA binding"/>
    <property type="evidence" value="ECO:0007669"/>
    <property type="project" value="UniProtKB-UniRule"/>
</dbReference>
<dbReference type="GO" id="GO:0003735">
    <property type="term" value="F:structural constituent of ribosome"/>
    <property type="evidence" value="ECO:0007669"/>
    <property type="project" value="InterPro"/>
</dbReference>
<dbReference type="GO" id="GO:0006412">
    <property type="term" value="P:translation"/>
    <property type="evidence" value="ECO:0007669"/>
    <property type="project" value="UniProtKB-UniRule"/>
</dbReference>
<dbReference type="FunFam" id="3.30.1370.30:FF:000002">
    <property type="entry name" value="30S ribosomal protein S8"/>
    <property type="match status" value="1"/>
</dbReference>
<dbReference type="FunFam" id="3.30.1490.10:FF:000001">
    <property type="entry name" value="30S ribosomal protein S8"/>
    <property type="match status" value="1"/>
</dbReference>
<dbReference type="Gene3D" id="3.30.1370.30">
    <property type="match status" value="1"/>
</dbReference>
<dbReference type="Gene3D" id="3.30.1490.10">
    <property type="match status" value="1"/>
</dbReference>
<dbReference type="HAMAP" id="MF_01302_B">
    <property type="entry name" value="Ribosomal_uS8_B"/>
    <property type="match status" value="1"/>
</dbReference>
<dbReference type="InterPro" id="IPR000630">
    <property type="entry name" value="Ribosomal_uS8"/>
</dbReference>
<dbReference type="InterPro" id="IPR047863">
    <property type="entry name" value="Ribosomal_uS8_CS"/>
</dbReference>
<dbReference type="InterPro" id="IPR035987">
    <property type="entry name" value="Ribosomal_uS8_sf"/>
</dbReference>
<dbReference type="NCBIfam" id="NF001109">
    <property type="entry name" value="PRK00136.1"/>
    <property type="match status" value="1"/>
</dbReference>
<dbReference type="PANTHER" id="PTHR11758">
    <property type="entry name" value="40S RIBOSOMAL PROTEIN S15A"/>
    <property type="match status" value="1"/>
</dbReference>
<dbReference type="Pfam" id="PF00410">
    <property type="entry name" value="Ribosomal_S8"/>
    <property type="match status" value="1"/>
</dbReference>
<dbReference type="SUPFAM" id="SSF56047">
    <property type="entry name" value="Ribosomal protein S8"/>
    <property type="match status" value="1"/>
</dbReference>
<dbReference type="PROSITE" id="PS00053">
    <property type="entry name" value="RIBOSOMAL_S8"/>
    <property type="match status" value="1"/>
</dbReference>
<evidence type="ECO:0000255" key="1">
    <source>
        <dbReference type="HAMAP-Rule" id="MF_01302"/>
    </source>
</evidence>
<evidence type="ECO:0000305" key="2"/>
<gene>
    <name evidence="1" type="primary">rpsH</name>
    <name type="ordered locus">Smal_0770</name>
</gene>
<feature type="chain" id="PRO_1000140617" description="Small ribosomal subunit protein uS8">
    <location>
        <begin position="1"/>
        <end position="132"/>
    </location>
</feature>